<protein>
    <recommendedName>
        <fullName>Elongation factor 1-beta</fullName>
        <shortName>EF-1-beta</shortName>
    </recommendedName>
    <alternativeName>
        <fullName>aEF-1beta</fullName>
    </alternativeName>
</protein>
<accession>Q57901</accession>
<keyword id="KW-0251">Elongation factor</keyword>
<keyword id="KW-0648">Protein biosynthesis</keyword>
<keyword id="KW-1185">Reference proteome</keyword>
<proteinExistence type="inferred from homology"/>
<comment type="function">
    <text evidence="1">Promotes the exchange of GDP for GTP in EF-1-alpha/GDP, thus allowing the regeneration of EF-1-alpha/GTP that could then be used to form the ternary complex EF-1-alpha/GTP/AAtRNA.</text>
</comment>
<comment type="similarity">
    <text evidence="2">Belongs to the EF-1-beta/EF-1-delta family.</text>
</comment>
<name>EF1B_METJA</name>
<reference key="1">
    <citation type="journal article" date="1996" name="Science">
        <title>Complete genome sequence of the methanogenic archaeon, Methanococcus jannaschii.</title>
        <authorList>
            <person name="Bult C.J."/>
            <person name="White O."/>
            <person name="Olsen G.J."/>
            <person name="Zhou L."/>
            <person name="Fleischmann R.D."/>
            <person name="Sutton G.G."/>
            <person name="Blake J.A."/>
            <person name="FitzGerald L.M."/>
            <person name="Clayton R.A."/>
            <person name="Gocayne J.D."/>
            <person name="Kerlavage A.R."/>
            <person name="Dougherty B.A."/>
            <person name="Tomb J.-F."/>
            <person name="Adams M.D."/>
            <person name="Reich C.I."/>
            <person name="Overbeek R."/>
            <person name="Kirkness E.F."/>
            <person name="Weinstock K.G."/>
            <person name="Merrick J.M."/>
            <person name="Glodek A."/>
            <person name="Scott J.L."/>
            <person name="Geoghagen N.S.M."/>
            <person name="Weidman J.F."/>
            <person name="Fuhrmann J.L."/>
            <person name="Nguyen D."/>
            <person name="Utterback T.R."/>
            <person name="Kelley J.M."/>
            <person name="Peterson J.D."/>
            <person name="Sadow P.W."/>
            <person name="Hanna M.C."/>
            <person name="Cotton M.D."/>
            <person name="Roberts K.M."/>
            <person name="Hurst M.A."/>
            <person name="Kaine B.P."/>
            <person name="Borodovsky M."/>
            <person name="Klenk H.-P."/>
            <person name="Fraser C.M."/>
            <person name="Smith H.O."/>
            <person name="Woese C.R."/>
            <person name="Venter J.C."/>
        </authorList>
    </citation>
    <scope>NUCLEOTIDE SEQUENCE [LARGE SCALE GENOMIC DNA]</scope>
    <source>
        <strain>ATCC 43067 / DSM 2661 / JAL-1 / JCM 10045 / NBRC 100440</strain>
    </source>
</reference>
<sequence>MATVLAKIKIMPTSPEVNKEKLKEKIKEVLEKQDVAIRGLFDEPLAFGLYAIYTVIEMEEREGGTEPIENALAEIDEVESVETVEVSLA</sequence>
<evidence type="ECO:0000250" key="1"/>
<evidence type="ECO:0000305" key="2"/>
<gene>
    <name type="primary">ef1b</name>
    <name type="ordered locus">MJ0459</name>
</gene>
<dbReference type="EMBL" id="L77117">
    <property type="protein sequence ID" value="AAB98467.1"/>
    <property type="molecule type" value="Genomic_DNA"/>
</dbReference>
<dbReference type="PIR" id="C64357">
    <property type="entry name" value="C64357"/>
</dbReference>
<dbReference type="RefSeq" id="WP_010869959.1">
    <property type="nucleotide sequence ID" value="NC_000909.1"/>
</dbReference>
<dbReference type="SMR" id="Q57901"/>
<dbReference type="FunCoup" id="Q57901">
    <property type="interactions" value="6"/>
</dbReference>
<dbReference type="STRING" id="243232.MJ_0459"/>
<dbReference type="PaxDb" id="243232-MJ_0459"/>
<dbReference type="EnsemblBacteria" id="AAB98467">
    <property type="protein sequence ID" value="AAB98467"/>
    <property type="gene ID" value="MJ_0459"/>
</dbReference>
<dbReference type="GeneID" id="1451321"/>
<dbReference type="KEGG" id="mja:MJ_0459"/>
<dbReference type="eggNOG" id="arCOG01988">
    <property type="taxonomic scope" value="Archaea"/>
</dbReference>
<dbReference type="HOGENOM" id="CLU_165896_0_0_2"/>
<dbReference type="InParanoid" id="Q57901"/>
<dbReference type="OrthoDB" id="84643at2157"/>
<dbReference type="PhylomeDB" id="Q57901"/>
<dbReference type="Proteomes" id="UP000000805">
    <property type="component" value="Chromosome"/>
</dbReference>
<dbReference type="GO" id="GO:0003746">
    <property type="term" value="F:translation elongation factor activity"/>
    <property type="evidence" value="ECO:0007669"/>
    <property type="project" value="UniProtKB-UniRule"/>
</dbReference>
<dbReference type="Gene3D" id="3.30.70.60">
    <property type="match status" value="1"/>
</dbReference>
<dbReference type="HAMAP" id="MF_00043">
    <property type="entry name" value="EF1_beta"/>
    <property type="match status" value="1"/>
</dbReference>
<dbReference type="InterPro" id="IPR036219">
    <property type="entry name" value="eEF-1beta-like_sf"/>
</dbReference>
<dbReference type="InterPro" id="IPR014038">
    <property type="entry name" value="EF1B_bsu/dsu_GNE"/>
</dbReference>
<dbReference type="InterPro" id="IPR014717">
    <property type="entry name" value="Transl_elong_EF1B/ribsomal_bS6"/>
</dbReference>
<dbReference type="InterPro" id="IPR004542">
    <property type="entry name" value="Transl_elong_EF1B_B_arc"/>
</dbReference>
<dbReference type="NCBIfam" id="TIGR00489">
    <property type="entry name" value="aEF-1_beta"/>
    <property type="match status" value="1"/>
</dbReference>
<dbReference type="NCBIfam" id="NF001670">
    <property type="entry name" value="PRK00435.1"/>
    <property type="match status" value="1"/>
</dbReference>
<dbReference type="PANTHER" id="PTHR39647">
    <property type="entry name" value="ELONGATION FACTOR 1-BETA"/>
    <property type="match status" value="1"/>
</dbReference>
<dbReference type="PANTHER" id="PTHR39647:SF1">
    <property type="entry name" value="ELONGATION FACTOR 1-BETA"/>
    <property type="match status" value="1"/>
</dbReference>
<dbReference type="Pfam" id="PF00736">
    <property type="entry name" value="EF1_GNE"/>
    <property type="match status" value="1"/>
</dbReference>
<dbReference type="PIRSF" id="PIRSF006521">
    <property type="entry name" value="Transl_elong_EF1B_B_arc"/>
    <property type="match status" value="1"/>
</dbReference>
<dbReference type="SMART" id="SM00888">
    <property type="entry name" value="EF1_GNE"/>
    <property type="match status" value="1"/>
</dbReference>
<dbReference type="SUPFAM" id="SSF54984">
    <property type="entry name" value="eEF-1beta-like"/>
    <property type="match status" value="1"/>
</dbReference>
<feature type="chain" id="PRO_0000155058" description="Elongation factor 1-beta">
    <location>
        <begin position="1"/>
        <end position="89"/>
    </location>
</feature>
<organism>
    <name type="scientific">Methanocaldococcus jannaschii (strain ATCC 43067 / DSM 2661 / JAL-1 / JCM 10045 / NBRC 100440)</name>
    <name type="common">Methanococcus jannaschii</name>
    <dbReference type="NCBI Taxonomy" id="243232"/>
    <lineage>
        <taxon>Archaea</taxon>
        <taxon>Methanobacteriati</taxon>
        <taxon>Methanobacteriota</taxon>
        <taxon>Methanomada group</taxon>
        <taxon>Methanococci</taxon>
        <taxon>Methanococcales</taxon>
        <taxon>Methanocaldococcaceae</taxon>
        <taxon>Methanocaldococcus</taxon>
    </lineage>
</organism>